<organism>
    <name type="scientific">Staphylococcus aureus (strain USA300)</name>
    <dbReference type="NCBI Taxonomy" id="367830"/>
    <lineage>
        <taxon>Bacteria</taxon>
        <taxon>Bacillati</taxon>
        <taxon>Bacillota</taxon>
        <taxon>Bacilli</taxon>
        <taxon>Bacillales</taxon>
        <taxon>Staphylococcaceae</taxon>
        <taxon>Staphylococcus</taxon>
    </lineage>
</organism>
<dbReference type="EC" id="2.3.2.16"/>
<dbReference type="EMBL" id="CP000255">
    <property type="protein sequence ID" value="ABD22463.1"/>
    <property type="molecule type" value="Genomic_DNA"/>
</dbReference>
<dbReference type="RefSeq" id="WP_000413865.1">
    <property type="nucleotide sequence ID" value="NZ_CP027476.1"/>
</dbReference>
<dbReference type="SMR" id="Q2FEM9"/>
<dbReference type="KEGG" id="saa:SAUSA300_2214"/>
<dbReference type="HOGENOM" id="CLU_048411_0_1_9"/>
<dbReference type="OMA" id="PNRMRLY"/>
<dbReference type="Proteomes" id="UP000001939">
    <property type="component" value="Chromosome"/>
</dbReference>
<dbReference type="GO" id="GO:0005737">
    <property type="term" value="C:cytoplasm"/>
    <property type="evidence" value="ECO:0007669"/>
    <property type="project" value="UniProtKB-SubCell"/>
</dbReference>
<dbReference type="GO" id="GO:0016755">
    <property type="term" value="F:aminoacyltransferase activity"/>
    <property type="evidence" value="ECO:0007669"/>
    <property type="project" value="InterPro"/>
</dbReference>
<dbReference type="GO" id="GO:0071555">
    <property type="term" value="P:cell wall organization"/>
    <property type="evidence" value="ECO:0007669"/>
    <property type="project" value="UniProtKB-KW"/>
</dbReference>
<dbReference type="GO" id="GO:0009252">
    <property type="term" value="P:peptidoglycan biosynthetic process"/>
    <property type="evidence" value="ECO:0007669"/>
    <property type="project" value="UniProtKB-KW"/>
</dbReference>
<dbReference type="GO" id="GO:0008360">
    <property type="term" value="P:regulation of cell shape"/>
    <property type="evidence" value="ECO:0007669"/>
    <property type="project" value="UniProtKB-KW"/>
</dbReference>
<dbReference type="GO" id="GO:0046677">
    <property type="term" value="P:response to antibiotic"/>
    <property type="evidence" value="ECO:0007669"/>
    <property type="project" value="UniProtKB-KW"/>
</dbReference>
<dbReference type="Gene3D" id="1.20.58.90">
    <property type="match status" value="1"/>
</dbReference>
<dbReference type="Gene3D" id="3.40.630.30">
    <property type="match status" value="2"/>
</dbReference>
<dbReference type="InterPro" id="IPR016181">
    <property type="entry name" value="Acyl_CoA_acyltransferase"/>
</dbReference>
<dbReference type="InterPro" id="IPR003447">
    <property type="entry name" value="FEMABX"/>
</dbReference>
<dbReference type="InterPro" id="IPR050644">
    <property type="entry name" value="PG_Glycine_Bridge_Synth"/>
</dbReference>
<dbReference type="PANTHER" id="PTHR36174">
    <property type="entry name" value="LIPID II:GLYCINE GLYCYLTRANSFERASE"/>
    <property type="match status" value="1"/>
</dbReference>
<dbReference type="PANTHER" id="PTHR36174:SF1">
    <property type="entry name" value="LIPID II:GLYCINE GLYCYLTRANSFERASE"/>
    <property type="match status" value="1"/>
</dbReference>
<dbReference type="Pfam" id="PF02388">
    <property type="entry name" value="FemAB"/>
    <property type="match status" value="1"/>
</dbReference>
<dbReference type="SUPFAM" id="SSF55729">
    <property type="entry name" value="Acyl-CoA N-acyltransferases (Nat)"/>
    <property type="match status" value="2"/>
</dbReference>
<dbReference type="PROSITE" id="PS51191">
    <property type="entry name" value="FEMABX"/>
    <property type="match status" value="1"/>
</dbReference>
<proteinExistence type="inferred from homology"/>
<accession>Q2FEM9</accession>
<comment type="function">
    <text evidence="1">Catalyzes the incorporation of the first glycine of the pentaglycine interpeptide bridge, which is characteristic of the S.aureus peptidoglycan. This glycine is added to the epsilon-amino group of the L-lysine of the membrane-bound lipid II intermediate (GlcNAc-(beta-1,4)-N-acetylmuramic acid(-L-Ala-D-iGln-L-Lys-D-Ala-D-Ala)-pyrophosphoryl-undecaprenol), using glycyl-tRNA(Gly) as donor, in a ribosome-independent mechanism. Involved in methicillin resistance (By similarity).</text>
</comment>
<comment type="catalytic activity">
    <reaction>
        <text>beta-D-GlcNAc-(1-&gt;4)-Mur2Ac(oyl-L-Ala-D-isoglutaminyl-L-Lys-D-Ala-D-Ala)-di-trans,octa-cis-undecaprenyl diphosphate + glycyl-tRNA(Gly) = beta-D-GlcNAc-(1-&gt;4)-Mur2Ac(oyl-L-Ala-D-isoglutaminyl-L-Lys-(N(6)-Gly)-D-Ala-D-Ala)-di-trans,octa-cis-undecaprenyl diphosphate + tRNA(Gly) + H(+)</text>
        <dbReference type="Rhea" id="RHEA:30435"/>
        <dbReference type="Rhea" id="RHEA-COMP:9664"/>
        <dbReference type="Rhea" id="RHEA-COMP:9683"/>
        <dbReference type="ChEBI" id="CHEBI:15378"/>
        <dbReference type="ChEBI" id="CHEBI:62233"/>
        <dbReference type="ChEBI" id="CHEBI:62234"/>
        <dbReference type="ChEBI" id="CHEBI:78442"/>
        <dbReference type="ChEBI" id="CHEBI:78522"/>
        <dbReference type="EC" id="2.3.2.16"/>
    </reaction>
</comment>
<comment type="subunit">
    <text evidence="1">Monomer.</text>
</comment>
<comment type="subcellular location">
    <subcellularLocation>
        <location evidence="2">Cytoplasm</location>
    </subcellularLocation>
</comment>
<comment type="similarity">
    <text evidence="2">Belongs to the FemABX family.</text>
</comment>
<sequence>MEKMHITNQEHDAFVKSHPNGDLLQLTKWAETKKLTGWYARRIAVGRDGEVQGVAQLLFKKVPKLPYTLCYISRGFVVDYSNKEALNALLDSAKEIAKAEKAYAIKIDPDVEVDKGTDALQNLKALGFKHKGFKEGLSKDYIQPRMTMITPIDKNDDELLNSFERRNRSKVRLALKRGTTVERSDREGLKTFAELMKITGERDGFLTRDISYFENIYDALHEDGDAELFLVKLDPKENIAKVNQELNELHAEIAKWQQKMKTSEKQAKKAQNMINDAQNKIAKNEDLKRDLEALEKEHPEGIYLSGALLMFAGSKSYYLYGASSNEFRDFLPNHHMQYTMMKYAREHGATTYDFGGTDNDPDKDSEHYGLWAFKKVWGTYLSEKIGEFDYVLNQPLYQLIEQVKPRLTKAKIKISRKLKRK</sequence>
<evidence type="ECO:0000250" key="1"/>
<evidence type="ECO:0000305" key="2"/>
<protein>
    <recommendedName>
        <fullName>Lipid II:glycine glycyltransferase</fullName>
        <ecNumber>2.3.2.16</ecNumber>
    </recommendedName>
    <alternativeName>
        <fullName>Factor essential for expression of methicillin resistance X</fullName>
    </alternativeName>
</protein>
<keyword id="KW-0012">Acyltransferase</keyword>
<keyword id="KW-0046">Antibiotic resistance</keyword>
<keyword id="KW-0133">Cell shape</keyword>
<keyword id="KW-0961">Cell wall biogenesis/degradation</keyword>
<keyword id="KW-0963">Cytoplasm</keyword>
<keyword id="KW-0573">Peptidoglycan synthesis</keyword>
<keyword id="KW-0808">Transferase</keyword>
<name>FEMX_STAA3</name>
<reference key="1">
    <citation type="journal article" date="2006" name="Lancet">
        <title>Complete genome sequence of USA300, an epidemic clone of community-acquired meticillin-resistant Staphylococcus aureus.</title>
        <authorList>
            <person name="Diep B.A."/>
            <person name="Gill S.R."/>
            <person name="Chang R.F."/>
            <person name="Phan T.H."/>
            <person name="Chen J.H."/>
            <person name="Davidson M.G."/>
            <person name="Lin F."/>
            <person name="Lin J."/>
            <person name="Carleton H.A."/>
            <person name="Mongodin E.F."/>
            <person name="Sensabaugh G.F."/>
            <person name="Perdreau-Remington F."/>
        </authorList>
    </citation>
    <scope>NUCLEOTIDE SEQUENCE [LARGE SCALE GENOMIC DNA]</scope>
    <source>
        <strain>USA300</strain>
    </source>
</reference>
<gene>
    <name type="primary">femX</name>
    <name type="synonym">fmhB</name>
    <name type="ordered locus">SAUSA300_2214</name>
</gene>
<feature type="chain" id="PRO_0000236169" description="Lipid II:glycine glycyltransferase">
    <location>
        <begin position="1"/>
        <end position="421"/>
    </location>
</feature>